<evidence type="ECO:0000255" key="1"/>
<evidence type="ECO:0000255" key="2">
    <source>
        <dbReference type="PROSITE-ProRule" id="PRU00498"/>
    </source>
</evidence>
<evidence type="ECO:0000256" key="3">
    <source>
        <dbReference type="SAM" id="MobiDB-lite"/>
    </source>
</evidence>
<evidence type="ECO:0000269" key="4">
    <source>
    </source>
</evidence>
<evidence type="ECO:0000303" key="5">
    <source>
    </source>
</evidence>
<evidence type="ECO:0000305" key="6"/>
<evidence type="ECO:0000305" key="7">
    <source>
    </source>
</evidence>
<evidence type="ECO:0000312" key="8">
    <source>
        <dbReference type="Araport" id="AT5G02410"/>
    </source>
</evidence>
<evidence type="ECO:0000312" key="9">
    <source>
        <dbReference type="EMBL" id="CAB85546.1"/>
    </source>
</evidence>
<feature type="chain" id="PRO_5005703628" description="Dol-P-Glc:Glc(2)Man(9)GlcNAc(2)-PP-Dol alpha-1,2-glucosyltransferase">
    <location>
        <begin position="1"/>
        <end position="509"/>
    </location>
</feature>
<feature type="topological domain" description="Cytoplasmic" evidence="6">
    <location>
        <begin position="1"/>
        <end position="4"/>
    </location>
</feature>
<feature type="transmembrane region" description="Helical" evidence="1">
    <location>
        <begin position="5"/>
        <end position="25"/>
    </location>
</feature>
<feature type="topological domain" description="Lumenal" evidence="6">
    <location>
        <begin position="26"/>
        <end position="57"/>
    </location>
</feature>
<feature type="transmembrane region" description="Helical" evidence="1">
    <location>
        <begin position="58"/>
        <end position="78"/>
    </location>
</feature>
<feature type="topological domain" description="Cytoplasmic" evidence="6">
    <location>
        <begin position="79"/>
        <end position="99"/>
    </location>
</feature>
<feature type="transmembrane region" description="Helical" evidence="1">
    <location>
        <begin position="100"/>
        <end position="120"/>
    </location>
</feature>
<feature type="topological domain" description="Lumenal" evidence="6">
    <location>
        <begin position="121"/>
        <end position="124"/>
    </location>
</feature>
<feature type="transmembrane region" description="Helical" evidence="1">
    <location>
        <begin position="125"/>
        <end position="145"/>
    </location>
</feature>
<feature type="topological domain" description="Cytoplasmic" evidence="6">
    <location>
        <begin position="146"/>
        <end position="170"/>
    </location>
</feature>
<feature type="transmembrane region" description="Helical" evidence="1">
    <location>
        <begin position="171"/>
        <end position="191"/>
    </location>
</feature>
<feature type="topological domain" description="Lumenal" evidence="6">
    <location>
        <begin position="192"/>
        <end position="285"/>
    </location>
</feature>
<feature type="transmembrane region" description="Helical" evidence="1">
    <location>
        <begin position="286"/>
        <end position="306"/>
    </location>
</feature>
<feature type="topological domain" description="Cytoplasmic" evidence="6">
    <location>
        <begin position="307"/>
        <end position="311"/>
    </location>
</feature>
<feature type="transmembrane region" description="Helical" evidence="1">
    <location>
        <begin position="312"/>
        <end position="332"/>
    </location>
</feature>
<feature type="topological domain" description="Lumenal" evidence="6">
    <location>
        <begin position="333"/>
        <end position="355"/>
    </location>
</feature>
<feature type="transmembrane region" description="Helical" evidence="1">
    <location>
        <begin position="356"/>
        <end position="376"/>
    </location>
</feature>
<feature type="topological domain" description="Cytoplasmic" evidence="6">
    <location>
        <begin position="377"/>
        <end position="400"/>
    </location>
</feature>
<feature type="transmembrane region" description="Helical" evidence="1">
    <location>
        <begin position="401"/>
        <end position="421"/>
    </location>
</feature>
<feature type="topological domain" description="Lumenal" evidence="6">
    <location>
        <begin position="422"/>
        <end position="428"/>
    </location>
</feature>
<feature type="transmembrane region" description="Helical" evidence="1">
    <location>
        <begin position="429"/>
        <end position="449"/>
    </location>
</feature>
<feature type="topological domain" description="Cytoplasmic" evidence="6">
    <location>
        <begin position="450"/>
        <end position="472"/>
    </location>
</feature>
<feature type="transmembrane region" description="Helical" evidence="1">
    <location>
        <begin position="473"/>
        <end position="493"/>
    </location>
</feature>
<feature type="topological domain" description="Lumenal" evidence="6">
    <location>
        <begin position="494"/>
        <end position="509"/>
    </location>
</feature>
<feature type="region of interest" description="Disordered" evidence="3">
    <location>
        <begin position="210"/>
        <end position="254"/>
    </location>
</feature>
<feature type="compositionally biased region" description="Polar residues" evidence="3">
    <location>
        <begin position="215"/>
        <end position="229"/>
    </location>
</feature>
<feature type="compositionally biased region" description="Polar residues" evidence="3">
    <location>
        <begin position="239"/>
        <end position="254"/>
    </location>
</feature>
<feature type="glycosylation site" description="N-linked (GlcNAc...) asparagine" evidence="2">
    <location>
        <position position="351"/>
    </location>
</feature>
<comment type="function">
    <text evidence="4">Dol-P-Glc:Glc(2)Man(9)GlcNAc(2)-PP-Dol alpha-1,2-glucosyltransferase that operates in the biosynthetic pathway of dolichol-linked oligosaccharides, the glycan precursors employed in protein asparagine (N)-glycosylation. The assembly of dolichol-linked oligosaccharides begins on the cytosolic side of the endoplasmic reticulum membrane and finishes in its lumen. The sequential addition of sugars to dolichol pyrophosphate produces dolichol-linked oligosaccharides containing fourteen sugars, including two GlcNAcs, nine mannoses and three glucoses. Once assembled, the oligosaccharide is transferred from the lipid to nascent proteins by oligosaccharyltransferases. In the lumen of the endoplasmic reticulum, adds the third and last glucose residue from dolichyl phosphate glucose (Dol-P-Glc) onto the lipid-linked oligosaccharide intermediate Glc(2)Man(9)GlcNAc(2)-PP-Dol to produce Glc(3)Man(9)GlcNAc(2)-PP-Dol.</text>
</comment>
<comment type="catalytic activity">
    <reaction evidence="4">
        <text>an alpha-D-Glc-(1-&gt;3)-alpha-D-Glc-(1-&gt;3)-alpha-D-Man-(1-&gt;2)-alpha-D-Man-(1-&gt;2)-alpha-D-Man-(1-&gt;3)-[alpha-D-Man-(1-&gt;2)-alpha-D-Man-(1-&gt;3)-[alpha-D-Man-(1-&gt;2)-alpha-D-Man-(1-&gt;6)]-alpha-D-Man-(1-&gt;6)]-beta-D-Man-(1-&gt;4)-beta-D-GlcNAc-(1-&gt;4)-alpha-D-GlcNAc-diphospho-di-trans,poly-cis-dolichol + a di-trans,poly-cis-dolichyl beta-D-glucosyl phosphate = a alpha-D-Glc-(1-&gt;2)-alpha-D-Glc-(1-&gt;3)-alpha-D-Glc-(1-&gt;3)-alpha-D-Man-(1-&gt;2)-alpha-D-Man-(1-&gt;2)-alpha-D-Man-(1-&gt;3)-[alpha-D-Man-(1-&gt;2)-alpha-D-Man-(1-&gt;3)-[alpha-D-Man-(1-&gt;2)-alpha-D-Man-(1-&gt;6)]-alpha-D-Man-(1-&gt;6)]-beta-D-Man-(1-&gt;4)-beta-D-GlcNAc-(1-&gt;4)-alpha-D-GlcNAc-diphospho-di-trans,poly-cis-dolichol + a di-trans,poly-cis-dolichyl phosphate + H(+)</text>
        <dbReference type="Rhea" id="RHEA:29543"/>
        <dbReference type="Rhea" id="RHEA-COMP:19498"/>
        <dbReference type="Rhea" id="RHEA-COMP:19502"/>
        <dbReference type="Rhea" id="RHEA-COMP:19512"/>
        <dbReference type="Rhea" id="RHEA-COMP:19522"/>
        <dbReference type="ChEBI" id="CHEBI:15378"/>
        <dbReference type="ChEBI" id="CHEBI:57525"/>
        <dbReference type="ChEBI" id="CHEBI:57683"/>
        <dbReference type="ChEBI" id="CHEBI:132522"/>
        <dbReference type="ChEBI" id="CHEBI:132523"/>
        <dbReference type="EC" id="2.4.1.256"/>
    </reaction>
    <physiologicalReaction direction="left-to-right" evidence="4">
        <dbReference type="Rhea" id="RHEA:29544"/>
    </physiologicalReaction>
</comment>
<comment type="pathway">
    <text evidence="7">Protein modification; protein glycosylation.</text>
</comment>
<comment type="subcellular location">
    <subcellularLocation>
        <location evidence="4">Endoplasmic reticulum membrane</location>
        <topology evidence="1">Multi-pass membrane protein</topology>
    </subcellularLocation>
</comment>
<comment type="disruption phenotype">
    <text evidence="4">Small plants with reduced leaf size. Hypoglycosylation of glycoproteins leading to ER stress and activation of the unfolded protein response (UPR). Increased sensitivity to salt stress.</text>
</comment>
<comment type="similarity">
    <text evidence="6">Belongs to the ALG10 glucosyltransferase family.</text>
</comment>
<comment type="sequence caution" evidence="6">
    <conflict type="erroneous gene model prediction">
        <sequence resource="EMBL-CDS" id="CAB85546"/>
    </conflict>
</comment>
<keyword id="KW-0256">Endoplasmic reticulum</keyword>
<keyword id="KW-0325">Glycoprotein</keyword>
<keyword id="KW-0328">Glycosyltransferase</keyword>
<keyword id="KW-0472">Membrane</keyword>
<keyword id="KW-1185">Reference proteome</keyword>
<keyword id="KW-0808">Transferase</keyword>
<keyword id="KW-0812">Transmembrane</keyword>
<keyword id="KW-1133">Transmembrane helix</keyword>
<accession>Q8L638</accession>
<accession>Q9LZ85</accession>
<sequence>MGKLAVAAITSLWVIPMSIIVNHIVPEPYMDEIFHVPQAQQYCNGNFRSWDPMITTPPGLYYLSLAHVASLFPGMLLMENTSQSFSEACSTSVLRSTNAVSAVLCGVLVYEIIRFLGPNLSDRKATFMALVMSLYPLHWFFTFLYYTDVASLTAVLAMYLTCLKRRYVLSALFGTLAVFIRQTNVVWMLFVACSGILDFTLDSSKQKGKQEVNQELHQSSNKKGATLRSNLRKRKSDISSDTSDPFNHGQTVPSTEDTSDLVYDIYTVISTSWNLKWRILIKFSPFIFVVVAFGIFILWNGGIVLGAKEAHVVSLHFAQIMYFSLVSALFTAPLHFSVNQLRHQFHQLHRNWSLSLILTLVALVAGFVSVHFFSLAHPYLLADNRHYPFYLWRKIINAHWLMKYILVPVYVYSWFSILTLLAKTRRQTWILVYFLATCGVLVPTPLIEFRYYTIPFYLFMLHSCVRSSSFATWLLIGTIFVSINVFTMAMFLFRPFKWSHEDGVQRFIW</sequence>
<reference key="1">
    <citation type="journal article" date="2014" name="Plant J.">
        <title>The plant glycosyltransferase clone collection for functional genomics.</title>
        <authorList>
            <person name="Lao J."/>
            <person name="Oikawa A."/>
            <person name="Bromley J.R."/>
            <person name="McInerney P."/>
            <person name="Suttangkakul A."/>
            <person name="Smith-Moritz A.M."/>
            <person name="Plahar H."/>
            <person name="Chiu T.-Y."/>
            <person name="Gonzalez Fernandez-Nino S.M.G."/>
            <person name="Ebert B."/>
            <person name="Yang F."/>
            <person name="Christiansen K.M."/>
            <person name="Hansen S.F."/>
            <person name="Stonebloom S."/>
            <person name="Adams P.D."/>
            <person name="Ronald P.C."/>
            <person name="Hillson N.J."/>
            <person name="Hadi M.Z."/>
            <person name="Vega-Sanchez M.E."/>
            <person name="Loque D."/>
            <person name="Scheller H.V."/>
            <person name="Heazlewood J.L."/>
        </authorList>
    </citation>
    <scope>NUCLEOTIDE SEQUENCE [LARGE SCALE MRNA]</scope>
</reference>
<reference key="2">
    <citation type="journal article" date="2000" name="Nature">
        <title>Sequence and analysis of chromosome 5 of the plant Arabidopsis thaliana.</title>
        <authorList>
            <person name="Tabata S."/>
            <person name="Kaneko T."/>
            <person name="Nakamura Y."/>
            <person name="Kotani H."/>
            <person name="Kato T."/>
            <person name="Asamizu E."/>
            <person name="Miyajima N."/>
            <person name="Sasamoto S."/>
            <person name="Kimura T."/>
            <person name="Hosouchi T."/>
            <person name="Kawashima K."/>
            <person name="Kohara M."/>
            <person name="Matsumoto M."/>
            <person name="Matsuno A."/>
            <person name="Muraki A."/>
            <person name="Nakayama S."/>
            <person name="Nakazaki N."/>
            <person name="Naruo K."/>
            <person name="Okumura S."/>
            <person name="Shinpo S."/>
            <person name="Takeuchi C."/>
            <person name="Wada T."/>
            <person name="Watanabe A."/>
            <person name="Yamada M."/>
            <person name="Yasuda M."/>
            <person name="Sato S."/>
            <person name="de la Bastide M."/>
            <person name="Huang E."/>
            <person name="Spiegel L."/>
            <person name="Gnoj L."/>
            <person name="O'Shaughnessy A."/>
            <person name="Preston R."/>
            <person name="Habermann K."/>
            <person name="Murray J."/>
            <person name="Johnson D."/>
            <person name="Rohlfing T."/>
            <person name="Nelson J."/>
            <person name="Stoneking T."/>
            <person name="Pepin K."/>
            <person name="Spieth J."/>
            <person name="Sekhon M."/>
            <person name="Armstrong J."/>
            <person name="Becker M."/>
            <person name="Belter E."/>
            <person name="Cordum H."/>
            <person name="Cordes M."/>
            <person name="Courtney L."/>
            <person name="Courtney W."/>
            <person name="Dante M."/>
            <person name="Du H."/>
            <person name="Edwards J."/>
            <person name="Fryman J."/>
            <person name="Haakensen B."/>
            <person name="Lamar E."/>
            <person name="Latreille P."/>
            <person name="Leonard S."/>
            <person name="Meyer R."/>
            <person name="Mulvaney E."/>
            <person name="Ozersky P."/>
            <person name="Riley A."/>
            <person name="Strowmatt C."/>
            <person name="Wagner-McPherson C."/>
            <person name="Wollam A."/>
            <person name="Yoakum M."/>
            <person name="Bell M."/>
            <person name="Dedhia N."/>
            <person name="Parnell L."/>
            <person name="Shah R."/>
            <person name="Rodriguez M."/>
            <person name="Hoon See L."/>
            <person name="Vil D."/>
            <person name="Baker J."/>
            <person name="Kirchoff K."/>
            <person name="Toth K."/>
            <person name="King L."/>
            <person name="Bahret A."/>
            <person name="Miller B."/>
            <person name="Marra M.A."/>
            <person name="Martienssen R."/>
            <person name="McCombie W.R."/>
            <person name="Wilson R.K."/>
            <person name="Murphy G."/>
            <person name="Bancroft I."/>
            <person name="Volckaert G."/>
            <person name="Wambutt R."/>
            <person name="Duesterhoeft A."/>
            <person name="Stiekema W."/>
            <person name="Pohl T."/>
            <person name="Entian K.-D."/>
            <person name="Terryn N."/>
            <person name="Hartley N."/>
            <person name="Bent E."/>
            <person name="Johnson S."/>
            <person name="Langham S.-A."/>
            <person name="McCullagh B."/>
            <person name="Robben J."/>
            <person name="Grymonprez B."/>
            <person name="Zimmermann W."/>
            <person name="Ramsperger U."/>
            <person name="Wedler H."/>
            <person name="Balke K."/>
            <person name="Wedler E."/>
            <person name="Peters S."/>
            <person name="van Staveren M."/>
            <person name="Dirkse W."/>
            <person name="Mooijman P."/>
            <person name="Klein Lankhorst R."/>
            <person name="Weitzenegger T."/>
            <person name="Bothe G."/>
            <person name="Rose M."/>
            <person name="Hauf J."/>
            <person name="Berneiser S."/>
            <person name="Hempel S."/>
            <person name="Feldpausch M."/>
            <person name="Lamberth S."/>
            <person name="Villarroel R."/>
            <person name="Gielen J."/>
            <person name="Ardiles W."/>
            <person name="Bents O."/>
            <person name="Lemcke K."/>
            <person name="Kolesov G."/>
            <person name="Mayer K.F.X."/>
            <person name="Rudd S."/>
            <person name="Schoof H."/>
            <person name="Schueller C."/>
            <person name="Zaccaria P."/>
            <person name="Mewes H.-W."/>
            <person name="Bevan M."/>
            <person name="Fransz P.F."/>
        </authorList>
    </citation>
    <scope>NUCLEOTIDE SEQUENCE [LARGE SCALE GENOMIC DNA]</scope>
    <source>
        <strain>cv. Columbia</strain>
    </source>
</reference>
<reference key="3">
    <citation type="journal article" date="2017" name="Plant J.">
        <title>Araport11: a complete reannotation of the Arabidopsis thaliana reference genome.</title>
        <authorList>
            <person name="Cheng C.Y."/>
            <person name="Krishnakumar V."/>
            <person name="Chan A.P."/>
            <person name="Thibaud-Nissen F."/>
            <person name="Schobel S."/>
            <person name="Town C.D."/>
        </authorList>
    </citation>
    <scope>GENOME REANNOTATION</scope>
    <source>
        <strain>cv. Columbia</strain>
    </source>
</reference>
<reference key="4">
    <citation type="journal article" date="2003" name="Science">
        <title>Empirical analysis of transcriptional activity in the Arabidopsis genome.</title>
        <authorList>
            <person name="Yamada K."/>
            <person name="Lim J."/>
            <person name="Dale J.M."/>
            <person name="Chen H."/>
            <person name="Shinn P."/>
            <person name="Palm C.J."/>
            <person name="Southwick A.M."/>
            <person name="Wu H.C."/>
            <person name="Kim C.J."/>
            <person name="Nguyen M."/>
            <person name="Pham P.K."/>
            <person name="Cheuk R.F."/>
            <person name="Karlin-Newmann G."/>
            <person name="Liu S.X."/>
            <person name="Lam B."/>
            <person name="Sakano H."/>
            <person name="Wu T."/>
            <person name="Yu G."/>
            <person name="Miranda M."/>
            <person name="Quach H.L."/>
            <person name="Tripp M."/>
            <person name="Chang C.H."/>
            <person name="Lee J.M."/>
            <person name="Toriumi M.J."/>
            <person name="Chan M.M."/>
            <person name="Tang C.C."/>
            <person name="Onodera C.S."/>
            <person name="Deng J.M."/>
            <person name="Akiyama K."/>
            <person name="Ansari Y."/>
            <person name="Arakawa T."/>
            <person name="Banh J."/>
            <person name="Banno F."/>
            <person name="Bowser L."/>
            <person name="Brooks S.Y."/>
            <person name="Carninci P."/>
            <person name="Chao Q."/>
            <person name="Choy N."/>
            <person name="Enju A."/>
            <person name="Goldsmith A.D."/>
            <person name="Gurjal M."/>
            <person name="Hansen N.F."/>
            <person name="Hayashizaki Y."/>
            <person name="Johnson-Hopson C."/>
            <person name="Hsuan V.W."/>
            <person name="Iida K."/>
            <person name="Karnes M."/>
            <person name="Khan S."/>
            <person name="Koesema E."/>
            <person name="Ishida J."/>
            <person name="Jiang P.X."/>
            <person name="Jones T."/>
            <person name="Kawai J."/>
            <person name="Kamiya A."/>
            <person name="Meyers C."/>
            <person name="Nakajima M."/>
            <person name="Narusaka M."/>
            <person name="Seki M."/>
            <person name="Sakurai T."/>
            <person name="Satou M."/>
            <person name="Tamse R."/>
            <person name="Vaysberg M."/>
            <person name="Wallender E.K."/>
            <person name="Wong C."/>
            <person name="Yamamura Y."/>
            <person name="Yuan S."/>
            <person name="Shinozaki K."/>
            <person name="Davis R.W."/>
            <person name="Theologis A."/>
            <person name="Ecker J.R."/>
        </authorList>
    </citation>
    <scope>NUCLEOTIDE SEQUENCE [LARGE SCALE MRNA]</scope>
    <source>
        <strain>cv. Columbia</strain>
    </source>
</reference>
<reference key="5">
    <citation type="journal article" date="2011" name="Plant J.">
        <title>Arabidopsis thaliana alpha1,2-glucosyltransferase (ALG10) is required for efficient N-glycosylation and leaf growth.</title>
        <authorList>
            <person name="Farid A."/>
            <person name="Pabst M."/>
            <person name="Schoberer J."/>
            <person name="Altmann F."/>
            <person name="Gloessl J."/>
            <person name="Strasser R."/>
        </authorList>
    </citation>
    <scope>FUNCTION</scope>
    <scope>CATALYTIC ACTIVITY</scope>
    <scope>PATHWAY</scope>
    <scope>SUBCELLULAR LOCATION</scope>
    <scope>DISRUPTION PHENOTYPE</scope>
</reference>
<proteinExistence type="evidence at protein level"/>
<dbReference type="EC" id="2.4.1.256" evidence="4"/>
<dbReference type="EMBL" id="KJ138711">
    <property type="protein sequence ID" value="AHL38651.1"/>
    <property type="molecule type" value="mRNA"/>
</dbReference>
<dbReference type="EMBL" id="AL162874">
    <property type="protein sequence ID" value="CAB85546.1"/>
    <property type="status" value="ALT_SEQ"/>
    <property type="molecule type" value="Genomic_DNA"/>
</dbReference>
<dbReference type="EMBL" id="CP002688">
    <property type="protein sequence ID" value="AED90469.1"/>
    <property type="molecule type" value="Genomic_DNA"/>
</dbReference>
<dbReference type="EMBL" id="AY099540">
    <property type="protein sequence ID" value="AAM20392.1"/>
    <property type="molecule type" value="mRNA"/>
</dbReference>
<dbReference type="EMBL" id="BT002117">
    <property type="protein sequence ID" value="AAN72128.1"/>
    <property type="molecule type" value="mRNA"/>
</dbReference>
<dbReference type="PIR" id="T48262">
    <property type="entry name" value="T48262"/>
</dbReference>
<dbReference type="RefSeq" id="NP_195861.2">
    <property type="nucleotide sequence ID" value="NM_120319.4"/>
</dbReference>
<dbReference type="FunCoup" id="Q8L638">
    <property type="interactions" value="4247"/>
</dbReference>
<dbReference type="STRING" id="3702.Q8L638"/>
<dbReference type="CAZy" id="GT59">
    <property type="family name" value="Glycosyltransferase Family 59"/>
</dbReference>
<dbReference type="TCDB" id="9.B.231.1.5">
    <property type="family name" value="the die2/alg10 glycosyl transferase (die2/alg10) family"/>
</dbReference>
<dbReference type="GlyCosmos" id="Q8L638">
    <property type="glycosylation" value="1 site, No reported glycans"/>
</dbReference>
<dbReference type="GlyGen" id="Q8L638">
    <property type="glycosylation" value="1 site"/>
</dbReference>
<dbReference type="PaxDb" id="3702-AT5G02410.1"/>
<dbReference type="ProteomicsDB" id="244984"/>
<dbReference type="EnsemblPlants" id="AT5G02410.1">
    <property type="protein sequence ID" value="AT5G02410.1"/>
    <property type="gene ID" value="AT5G02410"/>
</dbReference>
<dbReference type="GeneID" id="831764"/>
<dbReference type="Gramene" id="AT5G02410.1">
    <property type="protein sequence ID" value="AT5G02410.1"/>
    <property type="gene ID" value="AT5G02410"/>
</dbReference>
<dbReference type="KEGG" id="ath:AT5G02410"/>
<dbReference type="Araport" id="AT5G02410"/>
<dbReference type="TAIR" id="AT5G02410">
    <property type="gene designation" value="ALG10"/>
</dbReference>
<dbReference type="eggNOG" id="KOG2642">
    <property type="taxonomic scope" value="Eukaryota"/>
</dbReference>
<dbReference type="HOGENOM" id="CLU_017053_1_0_1"/>
<dbReference type="InParanoid" id="Q8L638"/>
<dbReference type="OMA" id="VWDSKIT"/>
<dbReference type="PhylomeDB" id="Q8L638"/>
<dbReference type="UniPathway" id="UPA00378"/>
<dbReference type="PRO" id="PR:Q8L638"/>
<dbReference type="Proteomes" id="UP000006548">
    <property type="component" value="Chromosome 5"/>
</dbReference>
<dbReference type="ExpressionAtlas" id="Q8L638">
    <property type="expression patterns" value="baseline and differential"/>
</dbReference>
<dbReference type="GO" id="GO:0005783">
    <property type="term" value="C:endoplasmic reticulum"/>
    <property type="evidence" value="ECO:0000314"/>
    <property type="project" value="TAIR"/>
</dbReference>
<dbReference type="GO" id="GO:0005789">
    <property type="term" value="C:endoplasmic reticulum membrane"/>
    <property type="evidence" value="ECO:0007669"/>
    <property type="project" value="UniProtKB-SubCell"/>
</dbReference>
<dbReference type="GO" id="GO:0106073">
    <property type="term" value="F:dolichyl pyrophosphate Glc2Man9GlcNAc2 alpha-1,2-glucosyltransferase activity"/>
    <property type="evidence" value="ECO:0007669"/>
    <property type="project" value="UniProtKB-EC"/>
</dbReference>
<dbReference type="GO" id="GO:0046527">
    <property type="term" value="F:glucosyltransferase activity"/>
    <property type="evidence" value="ECO:0000315"/>
    <property type="project" value="TAIR"/>
</dbReference>
<dbReference type="GO" id="GO:0006488">
    <property type="term" value="P:dolichol-linked oligosaccharide biosynthetic process"/>
    <property type="evidence" value="ECO:0007669"/>
    <property type="project" value="InterPro"/>
</dbReference>
<dbReference type="GO" id="GO:0048366">
    <property type="term" value="P:leaf development"/>
    <property type="evidence" value="ECO:0000315"/>
    <property type="project" value="TAIR"/>
</dbReference>
<dbReference type="GO" id="GO:0006487">
    <property type="term" value="P:protein N-linked glycosylation"/>
    <property type="evidence" value="ECO:0000315"/>
    <property type="project" value="TAIR"/>
</dbReference>
<dbReference type="GO" id="GO:0009651">
    <property type="term" value="P:response to salt stress"/>
    <property type="evidence" value="ECO:0000315"/>
    <property type="project" value="TAIR"/>
</dbReference>
<dbReference type="InterPro" id="IPR016900">
    <property type="entry name" value="Alg10"/>
</dbReference>
<dbReference type="PANTHER" id="PTHR12989">
    <property type="entry name" value="ALPHA-1,2-GLUCOSYLTRANSFERASE ALG10"/>
    <property type="match status" value="1"/>
</dbReference>
<dbReference type="PANTHER" id="PTHR12989:SF10">
    <property type="entry name" value="DOL-P-GLC:GLC(2)MAN(9)GLCNAC(2)-PP-DOL ALPHA-1,2-GLUCOSYLTRANSFERASE-RELATED"/>
    <property type="match status" value="1"/>
</dbReference>
<dbReference type="Pfam" id="PF04922">
    <property type="entry name" value="DIE2_ALG10"/>
    <property type="match status" value="1"/>
</dbReference>
<dbReference type="PIRSF" id="PIRSF028810">
    <property type="entry name" value="Alpha1_2_glucosyltferase_Alg10"/>
    <property type="match status" value="1"/>
</dbReference>
<organism>
    <name type="scientific">Arabidopsis thaliana</name>
    <name type="common">Mouse-ear cress</name>
    <dbReference type="NCBI Taxonomy" id="3702"/>
    <lineage>
        <taxon>Eukaryota</taxon>
        <taxon>Viridiplantae</taxon>
        <taxon>Streptophyta</taxon>
        <taxon>Embryophyta</taxon>
        <taxon>Tracheophyta</taxon>
        <taxon>Spermatophyta</taxon>
        <taxon>Magnoliopsida</taxon>
        <taxon>eudicotyledons</taxon>
        <taxon>Gunneridae</taxon>
        <taxon>Pentapetalae</taxon>
        <taxon>rosids</taxon>
        <taxon>malvids</taxon>
        <taxon>Brassicales</taxon>
        <taxon>Brassicaceae</taxon>
        <taxon>Camelineae</taxon>
        <taxon>Arabidopsis</taxon>
    </lineage>
</organism>
<protein>
    <recommendedName>
        <fullName evidence="6">Dol-P-Glc:Glc(2)Man(9)GlcNAc(2)-PP-Dol alpha-1,2-glucosyltransferase</fullName>
        <ecNumber evidence="4">2.4.1.256</ecNumber>
    </recommendedName>
    <alternativeName>
        <fullName evidence="6">Alpha-1,2-glucosyltransferase ALG10 homolog</fullName>
    </alternativeName>
    <alternativeName>
        <fullName evidence="5">Protein HOMOLOG OF YEAST ALG10</fullName>
    </alternativeName>
</protein>
<name>ALG10_ARATH</name>
<gene>
    <name evidence="5" type="primary">ALG10</name>
    <name evidence="8" type="ordered locus">At5g02410</name>
    <name evidence="9" type="ORF">T1E22_170</name>
</gene>